<feature type="chain" id="PRO_1000059214" description="Potassium-transporting ATPase KdpC subunit">
    <location>
        <begin position="1"/>
        <end position="198"/>
    </location>
</feature>
<feature type="transmembrane region" description="Helical" evidence="1">
    <location>
        <begin position="8"/>
        <end position="28"/>
    </location>
</feature>
<dbReference type="EMBL" id="CP000246">
    <property type="protein sequence ID" value="ABG83863.1"/>
    <property type="molecule type" value="Genomic_DNA"/>
</dbReference>
<dbReference type="RefSeq" id="WP_003456358.1">
    <property type="nucleotide sequence ID" value="NC_008261.1"/>
</dbReference>
<dbReference type="SMR" id="Q0TRT2"/>
<dbReference type="STRING" id="195103.CPF_1212"/>
<dbReference type="PaxDb" id="195103-CPF_1212"/>
<dbReference type="GeneID" id="93002511"/>
<dbReference type="KEGG" id="cpf:CPF_1212"/>
<dbReference type="eggNOG" id="COG2156">
    <property type="taxonomic scope" value="Bacteria"/>
</dbReference>
<dbReference type="HOGENOM" id="CLU_077094_2_0_9"/>
<dbReference type="Proteomes" id="UP000001823">
    <property type="component" value="Chromosome"/>
</dbReference>
<dbReference type="GO" id="GO:0005886">
    <property type="term" value="C:plasma membrane"/>
    <property type="evidence" value="ECO:0007669"/>
    <property type="project" value="UniProtKB-SubCell"/>
</dbReference>
<dbReference type="GO" id="GO:0005524">
    <property type="term" value="F:ATP binding"/>
    <property type="evidence" value="ECO:0007669"/>
    <property type="project" value="UniProtKB-UniRule"/>
</dbReference>
<dbReference type="GO" id="GO:0008556">
    <property type="term" value="F:P-type potassium transmembrane transporter activity"/>
    <property type="evidence" value="ECO:0007669"/>
    <property type="project" value="InterPro"/>
</dbReference>
<dbReference type="HAMAP" id="MF_00276">
    <property type="entry name" value="KdpC"/>
    <property type="match status" value="1"/>
</dbReference>
<dbReference type="InterPro" id="IPR003820">
    <property type="entry name" value="KdpC"/>
</dbReference>
<dbReference type="NCBIfam" id="TIGR00681">
    <property type="entry name" value="kdpC"/>
    <property type="match status" value="1"/>
</dbReference>
<dbReference type="NCBIfam" id="NF001454">
    <property type="entry name" value="PRK00315.1"/>
    <property type="match status" value="1"/>
</dbReference>
<dbReference type="PANTHER" id="PTHR30042">
    <property type="entry name" value="POTASSIUM-TRANSPORTING ATPASE C CHAIN"/>
    <property type="match status" value="1"/>
</dbReference>
<dbReference type="PANTHER" id="PTHR30042:SF2">
    <property type="entry name" value="POTASSIUM-TRANSPORTING ATPASE KDPC SUBUNIT"/>
    <property type="match status" value="1"/>
</dbReference>
<dbReference type="Pfam" id="PF02669">
    <property type="entry name" value="KdpC"/>
    <property type="match status" value="1"/>
</dbReference>
<dbReference type="PIRSF" id="PIRSF001296">
    <property type="entry name" value="K_ATPase_KdpC"/>
    <property type="match status" value="1"/>
</dbReference>
<name>KDPC_CLOP1</name>
<organism>
    <name type="scientific">Clostridium perfringens (strain ATCC 13124 / DSM 756 / JCM 1290 / NCIMB 6125 / NCTC 8237 / Type A)</name>
    <dbReference type="NCBI Taxonomy" id="195103"/>
    <lineage>
        <taxon>Bacteria</taxon>
        <taxon>Bacillati</taxon>
        <taxon>Bacillota</taxon>
        <taxon>Clostridia</taxon>
        <taxon>Eubacteriales</taxon>
        <taxon>Clostridiaceae</taxon>
        <taxon>Clostridium</taxon>
    </lineage>
</organism>
<gene>
    <name evidence="1" type="primary">kdpC</name>
    <name type="ordered locus">CPF_1212</name>
</gene>
<keyword id="KW-0067">ATP-binding</keyword>
<keyword id="KW-1003">Cell membrane</keyword>
<keyword id="KW-0406">Ion transport</keyword>
<keyword id="KW-0472">Membrane</keyword>
<keyword id="KW-0547">Nucleotide-binding</keyword>
<keyword id="KW-0630">Potassium</keyword>
<keyword id="KW-0633">Potassium transport</keyword>
<keyword id="KW-0812">Transmembrane</keyword>
<keyword id="KW-1133">Transmembrane helix</keyword>
<keyword id="KW-0813">Transport</keyword>
<comment type="function">
    <text evidence="1">Part of the high-affinity ATP-driven potassium transport (or Kdp) system, which catalyzes the hydrolysis of ATP coupled with the electrogenic transport of potassium into the cytoplasm. This subunit acts as a catalytic chaperone that increases the ATP-binding affinity of the ATP-hydrolyzing subunit KdpB by the formation of a transient KdpB/KdpC/ATP ternary complex.</text>
</comment>
<comment type="subunit">
    <text evidence="1">The system is composed of three essential subunits: KdpA, KdpB and KdpC.</text>
</comment>
<comment type="subcellular location">
    <subcellularLocation>
        <location evidence="1">Cell membrane</location>
        <topology evidence="1">Single-pass membrane protein</topology>
    </subcellularLocation>
</comment>
<comment type="similarity">
    <text evidence="1">Belongs to the KdpC family.</text>
</comment>
<sequence length="198" mass="22196">MKIIRKSILAVLVFTILCGIIYPVSTTVLAQVLFKEEANGSIIEVDGKKYGSELLGQQFTDNKYLWGRIMNINVEMFKDSNGKPLMYSSPSNLSPASEEYEKLVKERVERIRSYNKGKEEEPIPVDLVTSSGSGLDPHISVAAAKYQVDRIAKERNLSVDYVNEIIDKYTTGRFLGIFGEKTVNVLKVNLALDGILRE</sequence>
<accession>Q0TRT2</accession>
<evidence type="ECO:0000255" key="1">
    <source>
        <dbReference type="HAMAP-Rule" id="MF_00276"/>
    </source>
</evidence>
<proteinExistence type="inferred from homology"/>
<protein>
    <recommendedName>
        <fullName evidence="1">Potassium-transporting ATPase KdpC subunit</fullName>
    </recommendedName>
    <alternativeName>
        <fullName evidence="1">ATP phosphohydrolase [potassium-transporting] C chain</fullName>
    </alternativeName>
    <alternativeName>
        <fullName evidence="1">Potassium-binding and translocating subunit C</fullName>
    </alternativeName>
    <alternativeName>
        <fullName evidence="1">Potassium-translocating ATPase C chain</fullName>
    </alternativeName>
</protein>
<reference key="1">
    <citation type="journal article" date="2006" name="Genome Res.">
        <title>Skewed genomic variability in strains of the toxigenic bacterial pathogen, Clostridium perfringens.</title>
        <authorList>
            <person name="Myers G.S.A."/>
            <person name="Rasko D.A."/>
            <person name="Cheung J.K."/>
            <person name="Ravel J."/>
            <person name="Seshadri R."/>
            <person name="DeBoy R.T."/>
            <person name="Ren Q."/>
            <person name="Varga J."/>
            <person name="Awad M.M."/>
            <person name="Brinkac L.M."/>
            <person name="Daugherty S.C."/>
            <person name="Haft D.H."/>
            <person name="Dodson R.J."/>
            <person name="Madupu R."/>
            <person name="Nelson W.C."/>
            <person name="Rosovitz M.J."/>
            <person name="Sullivan S.A."/>
            <person name="Khouri H."/>
            <person name="Dimitrov G.I."/>
            <person name="Watkins K.L."/>
            <person name="Mulligan S."/>
            <person name="Benton J."/>
            <person name="Radune D."/>
            <person name="Fisher D.J."/>
            <person name="Atkins H.S."/>
            <person name="Hiscox T."/>
            <person name="Jost B.H."/>
            <person name="Billington S.J."/>
            <person name="Songer J.G."/>
            <person name="McClane B.A."/>
            <person name="Titball R.W."/>
            <person name="Rood J.I."/>
            <person name="Melville S.B."/>
            <person name="Paulsen I.T."/>
        </authorList>
    </citation>
    <scope>NUCLEOTIDE SEQUENCE [LARGE SCALE GENOMIC DNA]</scope>
    <source>
        <strain>ATCC 13124 / DSM 756 / JCM 1290 / NCIMB 6125 / NCTC 8237 / S 107 / Type A</strain>
    </source>
</reference>